<protein>
    <recommendedName>
        <fullName evidence="1">Cell cycle protein GpsB</fullName>
    </recommendedName>
    <alternativeName>
        <fullName evidence="1">Guiding PBP1-shuttling protein</fullName>
    </alternativeName>
</protein>
<organism>
    <name type="scientific">Staphylococcus epidermidis (strain ATCC 35984 / DSM 28319 / BCRC 17069 / CCUG 31568 / BM 3577 / RP62A)</name>
    <dbReference type="NCBI Taxonomy" id="176279"/>
    <lineage>
        <taxon>Bacteria</taxon>
        <taxon>Bacillati</taxon>
        <taxon>Bacillota</taxon>
        <taxon>Bacilli</taxon>
        <taxon>Bacillales</taxon>
        <taxon>Staphylococcaceae</taxon>
        <taxon>Staphylococcus</taxon>
    </lineage>
</organism>
<feature type="chain" id="PRO_0000337946" description="Cell cycle protein GpsB">
    <location>
        <begin position="1"/>
        <end position="112"/>
    </location>
</feature>
<feature type="region of interest" description="Disordered" evidence="2">
    <location>
        <begin position="74"/>
        <end position="96"/>
    </location>
</feature>
<feature type="coiled-coil region" evidence="1">
    <location>
        <begin position="42"/>
        <end position="77"/>
    </location>
</feature>
<feature type="compositionally biased region" description="Low complexity" evidence="2">
    <location>
        <begin position="81"/>
        <end position="95"/>
    </location>
</feature>
<sequence length="112" mass="12935">MSDVSLKLSAKDIYEKDFEKTMARGYRREEVDAFLDDIITDYQKMADMNNEVVKLSEENHKLKKELEELRLRVATSRPQDNKNFSSNNSSSASNNVDILKRISNLEKAVFGK</sequence>
<evidence type="ECO:0000255" key="1">
    <source>
        <dbReference type="HAMAP-Rule" id="MF_02011"/>
    </source>
</evidence>
<evidence type="ECO:0000256" key="2">
    <source>
        <dbReference type="SAM" id="MobiDB-lite"/>
    </source>
</evidence>
<keyword id="KW-0131">Cell cycle</keyword>
<keyword id="KW-0132">Cell division</keyword>
<keyword id="KW-0133">Cell shape</keyword>
<keyword id="KW-0175">Coiled coil</keyword>
<keyword id="KW-0963">Cytoplasm</keyword>
<keyword id="KW-1185">Reference proteome</keyword>
<reference key="1">
    <citation type="journal article" date="2005" name="J. Bacteriol.">
        <title>Insights on evolution of virulence and resistance from the complete genome analysis of an early methicillin-resistant Staphylococcus aureus strain and a biofilm-producing methicillin-resistant Staphylococcus epidermidis strain.</title>
        <authorList>
            <person name="Gill S.R."/>
            <person name="Fouts D.E."/>
            <person name="Archer G.L."/>
            <person name="Mongodin E.F."/>
            <person name="DeBoy R.T."/>
            <person name="Ravel J."/>
            <person name="Paulsen I.T."/>
            <person name="Kolonay J.F."/>
            <person name="Brinkac L.M."/>
            <person name="Beanan M.J."/>
            <person name="Dodson R.J."/>
            <person name="Daugherty S.C."/>
            <person name="Madupu R."/>
            <person name="Angiuoli S.V."/>
            <person name="Durkin A.S."/>
            <person name="Haft D.H."/>
            <person name="Vamathevan J.J."/>
            <person name="Khouri H."/>
            <person name="Utterback T.R."/>
            <person name="Lee C."/>
            <person name="Dimitrov G."/>
            <person name="Jiang L."/>
            <person name="Qin H."/>
            <person name="Weidman J."/>
            <person name="Tran K."/>
            <person name="Kang K.H."/>
            <person name="Hance I.R."/>
            <person name="Nelson K.E."/>
            <person name="Fraser C.M."/>
        </authorList>
    </citation>
    <scope>NUCLEOTIDE SEQUENCE [LARGE SCALE GENOMIC DNA]</scope>
    <source>
        <strain>ATCC 35984 / DSM 28319 / BCRC 17069 / CCUG 31568 / BM 3577 / RP62A</strain>
    </source>
</reference>
<comment type="function">
    <text evidence="1">Divisome component that associates with the complex late in its assembly, after the Z-ring is formed, and is dependent on DivIC and PBP2B for its recruitment to the divisome. Together with EzrA, is a key component of the system that regulates PBP1 localization during cell cycle progression. Its main role could be the removal of PBP1 from the cell pole after pole maturation is completed. Also contributes to the recruitment of PBP1 to the division complex. Not essential for septum formation.</text>
</comment>
<comment type="subunit">
    <text evidence="1">Forms polymers through the coiled coil domains. Interacts with PBP1, MreC and EzrA.</text>
</comment>
<comment type="subcellular location">
    <subcellularLocation>
        <location evidence="1">Cytoplasm</location>
    </subcellularLocation>
    <text evidence="1">Shuttles between the lateral wall and the division site in a cell cycle-dependent manner.</text>
</comment>
<comment type="similarity">
    <text evidence="1">Belongs to the GpsB family.</text>
</comment>
<accession>Q5HP97</accession>
<proteinExistence type="inferred from homology"/>
<gene>
    <name evidence="1" type="primary">gpsB</name>
    <name type="ordered locus">SERP1016</name>
</gene>
<dbReference type="EMBL" id="CP000029">
    <property type="protein sequence ID" value="AAW54384.1"/>
    <property type="molecule type" value="Genomic_DNA"/>
</dbReference>
<dbReference type="RefSeq" id="WP_001831034.1">
    <property type="nucleotide sequence ID" value="NC_002976.3"/>
</dbReference>
<dbReference type="SMR" id="Q5HP97"/>
<dbReference type="STRING" id="176279.SERP1016"/>
<dbReference type="GeneID" id="50018743"/>
<dbReference type="KEGG" id="ser:SERP1016"/>
<dbReference type="eggNOG" id="COG3599">
    <property type="taxonomic scope" value="Bacteria"/>
</dbReference>
<dbReference type="HOGENOM" id="CLU_140309_1_0_9"/>
<dbReference type="Proteomes" id="UP000000531">
    <property type="component" value="Chromosome"/>
</dbReference>
<dbReference type="GO" id="GO:0005737">
    <property type="term" value="C:cytoplasm"/>
    <property type="evidence" value="ECO:0007669"/>
    <property type="project" value="UniProtKB-SubCell"/>
</dbReference>
<dbReference type="GO" id="GO:0051301">
    <property type="term" value="P:cell division"/>
    <property type="evidence" value="ECO:0007669"/>
    <property type="project" value="UniProtKB-UniRule"/>
</dbReference>
<dbReference type="GO" id="GO:0008360">
    <property type="term" value="P:regulation of cell shape"/>
    <property type="evidence" value="ECO:0007669"/>
    <property type="project" value="UniProtKB-UniRule"/>
</dbReference>
<dbReference type="Gene3D" id="6.10.250.660">
    <property type="match status" value="1"/>
</dbReference>
<dbReference type="HAMAP" id="MF_02011">
    <property type="entry name" value="GpsB"/>
    <property type="match status" value="1"/>
</dbReference>
<dbReference type="InterPro" id="IPR011229">
    <property type="entry name" value="Cell_cycle_GpsB"/>
</dbReference>
<dbReference type="InterPro" id="IPR019933">
    <property type="entry name" value="DivIVA_domain"/>
</dbReference>
<dbReference type="InterPro" id="IPR007793">
    <property type="entry name" value="DivIVA_fam"/>
</dbReference>
<dbReference type="NCBIfam" id="TIGR03544">
    <property type="entry name" value="DivI1A_domain"/>
    <property type="match status" value="1"/>
</dbReference>
<dbReference type="NCBIfam" id="NF010725">
    <property type="entry name" value="PRK14127.1"/>
    <property type="match status" value="1"/>
</dbReference>
<dbReference type="PANTHER" id="PTHR35794:SF1">
    <property type="entry name" value="CELL CYCLE PROTEIN GPSB"/>
    <property type="match status" value="1"/>
</dbReference>
<dbReference type="PANTHER" id="PTHR35794">
    <property type="entry name" value="CELL DIVISION PROTEIN DIVIVA"/>
    <property type="match status" value="1"/>
</dbReference>
<dbReference type="Pfam" id="PF05103">
    <property type="entry name" value="DivIVA"/>
    <property type="match status" value="1"/>
</dbReference>
<dbReference type="PIRSF" id="PIRSF029938">
    <property type="entry name" value="UCP029938"/>
    <property type="match status" value="1"/>
</dbReference>
<name>GPSB_STAEQ</name>